<comment type="function">
    <text evidence="2">Promotes apoptosis by activating caspases in the cytochrome c/Apaf-1/caspase-9 pathway. Acts by opposing the inhibitory activity of inhibitor of apoptosis proteins (IAP) (By similarity). Inhibits the activity of BIRC6/BRUCE by inhibiting its binding to caspases (By similarity).</text>
</comment>
<comment type="subunit">
    <text evidence="1 2">Homodimer (By similarity). Interacts with BEX3 (By similarity). Interacts with BIRC2/c-IAP1 (via BIR3 domain) (By similarity). Interacts with BIRC6/BRUCE (By similarity). Interacts with BIRC7/livin (By similarity). Interacts with XIAP/BIRC4 (via BIR3 domain) (By similarity). Interacts with the monomeric and dimeric form of BIRC5/survivin (By similarity). Interacts with AREL1 (via HECT domain); in the cytoplasm following induction of apoptosis (By similarity).</text>
</comment>
<comment type="subcellular location">
    <subcellularLocation>
        <location evidence="2">Mitochondrion</location>
    </subcellularLocation>
    <subcellularLocation>
        <location evidence="2">Cytoplasm</location>
        <location evidence="2">Cytosol</location>
    </subcellularLocation>
    <text evidence="2">Released into the cytosol in a PARL-dependent manner when cells undergo apoptosis.</text>
</comment>
<comment type="domain">
    <text evidence="2">The mature N-terminus mediates interaction with XIAP/BIRC4.</text>
</comment>
<comment type="PTM">
    <text evidence="2">Ubiquitinated by BIRC7/livin. Ubiquitinated by BIRC6.</text>
</comment>
<comment type="PTM">
    <text evidence="2">The precursor form is proteolytically cleaved by mitochondrial processing peptidase MPP to remove the transit peptide and produce an intermediate form. This is then processed by PARL to produce the mature cleaved form which is released from mitochondria into the cytosol in apoptotic cells.</text>
</comment>
<comment type="similarity">
    <text evidence="5">Belongs to the Smac/DIABLO protein family.</text>
</comment>
<accession>Q5RBH2</accession>
<protein>
    <recommendedName>
        <fullName evidence="1">Diablo IAP-binding mitochondrial protein</fullName>
    </recommendedName>
    <alternativeName>
        <fullName evidence="2">Diablo homolog, mitochondrial</fullName>
    </alternativeName>
    <alternativeName>
        <fullName evidence="2">Direct IAP-binding protein with low pI</fullName>
    </alternativeName>
    <alternativeName>
        <fullName evidence="2">Second mitochondria-derived activator of caspase</fullName>
        <shortName evidence="2">Smac</shortName>
    </alternativeName>
    <component>
        <recommendedName>
            <fullName>Diablo IAP-binding mitochondrial protein, cleaved form</fullName>
        </recommendedName>
    </component>
</protein>
<name>DBLOH_PONAB</name>
<sequence>MAVLKSWLSRSVTLLFRYRQCLCVPVVANFKKRCFSELIRPWHKTVTVGFGVTLCAVPIAQKSEPHSLSSEALMRRAVSLVTDSTSTFLSQTTYALIEAITEYTKAVYTLTSLYRQYTSLLGKMNSQEEDEVWQVIIGARAEMTSKHQEYLKLETTWMTAVGLSEMAAEAAYQTGADQAPITARNHIQLVKLQVEEVHQLSRKAETKLAEAQIEELRQKTQEEGEERAESEQEAYLRED</sequence>
<organism>
    <name type="scientific">Pongo abelii</name>
    <name type="common">Sumatran orangutan</name>
    <name type="synonym">Pongo pygmaeus abelii</name>
    <dbReference type="NCBI Taxonomy" id="9601"/>
    <lineage>
        <taxon>Eukaryota</taxon>
        <taxon>Metazoa</taxon>
        <taxon>Chordata</taxon>
        <taxon>Craniata</taxon>
        <taxon>Vertebrata</taxon>
        <taxon>Euteleostomi</taxon>
        <taxon>Mammalia</taxon>
        <taxon>Eutheria</taxon>
        <taxon>Euarchontoglires</taxon>
        <taxon>Primates</taxon>
        <taxon>Haplorrhini</taxon>
        <taxon>Catarrhini</taxon>
        <taxon>Hominidae</taxon>
        <taxon>Pongo</taxon>
    </lineage>
</organism>
<proteinExistence type="evidence at transcript level"/>
<gene>
    <name evidence="2" type="primary">DIABLO</name>
    <name evidence="2" type="synonym">SMAC</name>
</gene>
<evidence type="ECO:0000250" key="1">
    <source>
        <dbReference type="UniProtKB" id="Q9JIQ3"/>
    </source>
</evidence>
<evidence type="ECO:0000250" key="2">
    <source>
        <dbReference type="UniProtKB" id="Q9NR28"/>
    </source>
</evidence>
<evidence type="ECO:0000255" key="3"/>
<evidence type="ECO:0000256" key="4">
    <source>
        <dbReference type="SAM" id="MobiDB-lite"/>
    </source>
</evidence>
<evidence type="ECO:0000305" key="5"/>
<reference key="1">
    <citation type="submission" date="2004-11" db="EMBL/GenBank/DDBJ databases">
        <authorList>
            <consortium name="The German cDNA consortium"/>
        </authorList>
    </citation>
    <scope>NUCLEOTIDE SEQUENCE [LARGE SCALE MRNA]</scope>
    <source>
        <tissue>Kidney</tissue>
    </source>
</reference>
<dbReference type="EMBL" id="CR858676">
    <property type="protein sequence ID" value="CAH90888.1"/>
    <property type="molecule type" value="mRNA"/>
</dbReference>
<dbReference type="RefSeq" id="NP_001125507.1">
    <property type="nucleotide sequence ID" value="NM_001132035.2"/>
</dbReference>
<dbReference type="SMR" id="Q5RBH2"/>
<dbReference type="FunCoup" id="Q5RBH2">
    <property type="interactions" value="739"/>
</dbReference>
<dbReference type="STRING" id="9601.ENSPPYP00000005770"/>
<dbReference type="GeneID" id="100172416"/>
<dbReference type="KEGG" id="pon:100172416"/>
<dbReference type="CTD" id="56616"/>
<dbReference type="eggNOG" id="ENOG502RA48">
    <property type="taxonomic scope" value="Eukaryota"/>
</dbReference>
<dbReference type="InParanoid" id="Q5RBH2"/>
<dbReference type="OrthoDB" id="6153032at2759"/>
<dbReference type="Proteomes" id="UP000001595">
    <property type="component" value="Unplaced"/>
</dbReference>
<dbReference type="GO" id="GO:0005829">
    <property type="term" value="C:cytosol"/>
    <property type="evidence" value="ECO:0000250"/>
    <property type="project" value="UniProtKB"/>
</dbReference>
<dbReference type="GO" id="GO:0005739">
    <property type="term" value="C:mitochondrion"/>
    <property type="evidence" value="ECO:0000250"/>
    <property type="project" value="UniProtKB"/>
</dbReference>
<dbReference type="GO" id="GO:0008631">
    <property type="term" value="P:intrinsic apoptotic signaling pathway in response to oxidative stress"/>
    <property type="evidence" value="ECO:0007669"/>
    <property type="project" value="TreeGrafter"/>
</dbReference>
<dbReference type="GO" id="GO:0051402">
    <property type="term" value="P:neuron apoptotic process"/>
    <property type="evidence" value="ECO:0007669"/>
    <property type="project" value="TreeGrafter"/>
</dbReference>
<dbReference type="FunFam" id="1.20.58.70:FF:000012">
    <property type="entry name" value="diablo homolog, mitochondrial isoform X1"/>
    <property type="match status" value="1"/>
</dbReference>
<dbReference type="Gene3D" id="1.20.58.70">
    <property type="match status" value="1"/>
</dbReference>
<dbReference type="InterPro" id="IPR009062">
    <property type="entry name" value="Smac/DIABLO-like_sf"/>
</dbReference>
<dbReference type="InterPro" id="IPR015142">
    <property type="entry name" value="Smac_DIABLO"/>
</dbReference>
<dbReference type="PANTHER" id="PTHR32247">
    <property type="entry name" value="DIABLO HOMOLOG, MITOCHONDRIAL"/>
    <property type="match status" value="1"/>
</dbReference>
<dbReference type="PANTHER" id="PTHR32247:SF3">
    <property type="entry name" value="DIABLO IAP-BINDING MITOCHONDRIAL PROTEIN"/>
    <property type="match status" value="1"/>
</dbReference>
<dbReference type="Pfam" id="PF09057">
    <property type="entry name" value="Smac_DIABLO"/>
    <property type="match status" value="1"/>
</dbReference>
<dbReference type="SUPFAM" id="SSF46984">
    <property type="entry name" value="Smac/diablo"/>
    <property type="match status" value="1"/>
</dbReference>
<keyword id="KW-0053">Apoptosis</keyword>
<keyword id="KW-0963">Cytoplasm</keyword>
<keyword id="KW-0496">Mitochondrion</keyword>
<keyword id="KW-1185">Reference proteome</keyword>
<keyword id="KW-0809">Transit peptide</keyword>
<keyword id="KW-0832">Ubl conjugation</keyword>
<feature type="transit peptide" description="Mitochondrion" evidence="2">
    <location>
        <begin position="1"/>
        <end position="22"/>
    </location>
</feature>
<feature type="chain" id="PRO_0000458411" description="Diablo IAP-binding mitochondrial protein" evidence="2">
    <location>
        <begin position="23"/>
        <end position="239"/>
    </location>
</feature>
<feature type="chain" id="PRO_0000043071" description="Diablo IAP-binding mitochondrial protein, cleaved form" evidence="2">
    <location>
        <begin position="56"/>
        <end position="239"/>
    </location>
</feature>
<feature type="region of interest" description="Disordered" evidence="4">
    <location>
        <begin position="217"/>
        <end position="239"/>
    </location>
</feature>
<feature type="short sequence motif" description="IAP-binding" evidence="3">
    <location>
        <begin position="56"/>
        <end position="60"/>
    </location>
</feature>
<feature type="site" description="Cleavage; by PARL" evidence="2">
    <location>
        <begin position="55"/>
        <end position="56"/>
    </location>
</feature>